<evidence type="ECO:0000250" key="1"/>
<evidence type="ECO:0000250" key="2">
    <source>
        <dbReference type="UniProtKB" id="P53919"/>
    </source>
</evidence>
<evidence type="ECO:0000250" key="3">
    <source>
        <dbReference type="UniProtKB" id="Q96HR8"/>
    </source>
</evidence>
<evidence type="ECO:0000256" key="4">
    <source>
        <dbReference type="SAM" id="MobiDB-lite"/>
    </source>
</evidence>
<evidence type="ECO:0000305" key="5"/>
<evidence type="ECO:0007744" key="6">
    <source>
    </source>
</evidence>
<keyword id="KW-0007">Acetylation</keyword>
<keyword id="KW-0963">Cytoplasm</keyword>
<keyword id="KW-1017">Isopeptide bond</keyword>
<keyword id="KW-0539">Nucleus</keyword>
<keyword id="KW-0597">Phosphoprotein</keyword>
<keyword id="KW-1185">Reference proteome</keyword>
<keyword id="KW-0687">Ribonucleoprotein</keyword>
<keyword id="KW-0690">Ribosome biogenesis</keyword>
<keyword id="KW-0694">RNA-binding</keyword>
<keyword id="KW-0698">rRNA processing</keyword>
<keyword id="KW-0832">Ubl conjugation</keyword>
<reference key="1">
    <citation type="journal article" date="2004" name="Genome Res.">
        <title>The status, quality, and expansion of the NIH full-length cDNA project: the Mammalian Gene Collection (MGC).</title>
        <authorList>
            <consortium name="The MGC Project Team"/>
        </authorList>
    </citation>
    <scope>NUCLEOTIDE SEQUENCE [LARGE SCALE MRNA]</scope>
    <source>
        <tissue>Brain</tissue>
    </source>
</reference>
<reference key="2">
    <citation type="journal article" date="2012" name="Nat. Commun.">
        <title>Quantitative maps of protein phosphorylation sites across 14 different rat organs and tissues.</title>
        <authorList>
            <person name="Lundby A."/>
            <person name="Secher A."/>
            <person name="Lage K."/>
            <person name="Nordsborg N.B."/>
            <person name="Dmytriyev A."/>
            <person name="Lundby C."/>
            <person name="Olsen J.V."/>
        </authorList>
    </citation>
    <scope>PHOSPHORYLATION [LARGE SCALE ANALYSIS] AT SER-280</scope>
    <scope>IDENTIFICATION BY MASS SPECTROMETRY [LARGE SCALE ANALYSIS]</scope>
</reference>
<organism>
    <name type="scientific">Rattus norvegicus</name>
    <name type="common">Rat</name>
    <dbReference type="NCBI Taxonomy" id="10116"/>
    <lineage>
        <taxon>Eukaryota</taxon>
        <taxon>Metazoa</taxon>
        <taxon>Chordata</taxon>
        <taxon>Craniata</taxon>
        <taxon>Vertebrata</taxon>
        <taxon>Euteleostomi</taxon>
        <taxon>Mammalia</taxon>
        <taxon>Eutheria</taxon>
        <taxon>Euarchontoglires</taxon>
        <taxon>Glires</taxon>
        <taxon>Rodentia</taxon>
        <taxon>Myomorpha</taxon>
        <taxon>Muroidea</taxon>
        <taxon>Muridae</taxon>
        <taxon>Murinae</taxon>
        <taxon>Rattus</taxon>
    </lineage>
</organism>
<feature type="chain" id="PRO_0000315639" description="H/ACA ribonucleoprotein complex non-core subunit NAF1">
    <location>
        <begin position="1"/>
        <end position="457"/>
    </location>
</feature>
<feature type="region of interest" description="Disordered" evidence="4">
    <location>
        <begin position="1"/>
        <end position="132"/>
    </location>
</feature>
<feature type="region of interest" description="Disordered" evidence="4">
    <location>
        <begin position="261"/>
        <end position="303"/>
    </location>
</feature>
<feature type="region of interest" description="Disordered" evidence="4">
    <location>
        <begin position="316"/>
        <end position="388"/>
    </location>
</feature>
<feature type="region of interest" description="Disordered" evidence="4">
    <location>
        <begin position="423"/>
        <end position="457"/>
    </location>
</feature>
<feature type="compositionally biased region" description="Acidic residues" evidence="4">
    <location>
        <begin position="80"/>
        <end position="95"/>
    </location>
</feature>
<feature type="compositionally biased region" description="Low complexity" evidence="4">
    <location>
        <begin position="96"/>
        <end position="110"/>
    </location>
</feature>
<feature type="compositionally biased region" description="Basic and acidic residues" evidence="4">
    <location>
        <begin position="261"/>
        <end position="270"/>
    </location>
</feature>
<feature type="compositionally biased region" description="Basic residues" evidence="4">
    <location>
        <begin position="289"/>
        <end position="302"/>
    </location>
</feature>
<feature type="compositionally biased region" description="Basic and acidic residues" evidence="4">
    <location>
        <begin position="327"/>
        <end position="338"/>
    </location>
</feature>
<feature type="compositionally biased region" description="Polar residues" evidence="4">
    <location>
        <begin position="358"/>
        <end position="370"/>
    </location>
</feature>
<feature type="compositionally biased region" description="Pro residues" evidence="4">
    <location>
        <begin position="430"/>
        <end position="445"/>
    </location>
</feature>
<feature type="compositionally biased region" description="Polar residues" evidence="4">
    <location>
        <begin position="446"/>
        <end position="457"/>
    </location>
</feature>
<feature type="modified residue" description="N-acetylmethionine" evidence="3">
    <location>
        <position position="1"/>
    </location>
</feature>
<feature type="modified residue" description="Phosphoserine" evidence="6">
    <location>
        <position position="280"/>
    </location>
</feature>
<feature type="cross-link" description="Glycyl lysine isopeptide (Lys-Gly) (interchain with G-Cter in SUMO2)" evidence="3">
    <location>
        <position position="303"/>
    </location>
</feature>
<protein>
    <recommendedName>
        <fullName>H/ACA ribonucleoprotein complex non-core subunit NAF1</fullName>
    </recommendedName>
</protein>
<gene>
    <name type="primary">Naf1</name>
</gene>
<sequence>MEVVEAAAQLQTLKFGGSGPGSAASPPPEERPDAEQAEQAPPAGEQPPPAPSSDAGENPPPPSGPCATAPDAAEPLPELQDSDSSDSDSDSETDSDSSSSSSSSSSSSSSCGSLPPVLSDGEEDVQVEKENKNFPLKTKDELLLNELPSVEELTVTLPEDIALKPLGKVSSIIEQLVIIESMTNIPPVNEDTVIFKSDRQAAGKIFEIFGPVAHPFYVLRFNSSEHIESKGIKIKDTMYFAPSMKDFTQYIFTEKLKQDRGSDASWKNDQEPPPEALDFSDDEKEKEAKQRKKSQIQGRKKLKSELNESGEDFGEVHQNWNANSSSEHSKGYHNREFTRGFPRGRYSRGSHGRPPPQQYYNSDPMASQESLGFPPQRQDNPVMPHYPFPPPMFDMHNFPLPPPPPPPPTVSMGWAAPSMTSHPVLNLPYSLPPPPLPPPPPPPSPGESNSSHFGSYY</sequence>
<dbReference type="EMBL" id="BC094302">
    <property type="protein sequence ID" value="AAH94302.1"/>
    <property type="molecule type" value="mRNA"/>
</dbReference>
<dbReference type="RefSeq" id="NP_001019943.1">
    <property type="nucleotide sequence ID" value="NM_001024772.2"/>
</dbReference>
<dbReference type="SMR" id="Q52KK4"/>
<dbReference type="FunCoup" id="Q52KK4">
    <property type="interactions" value="1730"/>
</dbReference>
<dbReference type="STRING" id="10116.ENSRNOP00000031163"/>
<dbReference type="GlyGen" id="Q52KK4">
    <property type="glycosylation" value="1 site"/>
</dbReference>
<dbReference type="iPTMnet" id="Q52KK4"/>
<dbReference type="PhosphoSitePlus" id="Q52KK4"/>
<dbReference type="PaxDb" id="10116-ENSRNOP00000031163"/>
<dbReference type="Ensembl" id="ENSRNOT00000033916.7">
    <property type="protein sequence ID" value="ENSRNOP00000031163.7"/>
    <property type="gene ID" value="ENSRNOG00000026403.7"/>
</dbReference>
<dbReference type="GeneID" id="306387"/>
<dbReference type="KEGG" id="rno:306387"/>
<dbReference type="UCSC" id="RGD:1306802">
    <property type="organism name" value="rat"/>
</dbReference>
<dbReference type="AGR" id="RGD:1306802"/>
<dbReference type="CTD" id="92345"/>
<dbReference type="RGD" id="1306802">
    <property type="gene designation" value="Naf1"/>
</dbReference>
<dbReference type="eggNOG" id="KOG2236">
    <property type="taxonomic scope" value="Eukaryota"/>
</dbReference>
<dbReference type="GeneTree" id="ENSGT00390000004697"/>
<dbReference type="InParanoid" id="Q52KK4"/>
<dbReference type="OMA" id="WKNDDEP"/>
<dbReference type="OrthoDB" id="21550at2759"/>
<dbReference type="PhylomeDB" id="Q52KK4"/>
<dbReference type="PRO" id="PR:Q52KK4"/>
<dbReference type="Proteomes" id="UP000002494">
    <property type="component" value="Chromosome 16"/>
</dbReference>
<dbReference type="GO" id="GO:0005737">
    <property type="term" value="C:cytoplasm"/>
    <property type="evidence" value="ECO:0000250"/>
    <property type="project" value="UniProtKB"/>
</dbReference>
<dbReference type="GO" id="GO:0005634">
    <property type="term" value="C:nucleus"/>
    <property type="evidence" value="ECO:0000250"/>
    <property type="project" value="UniProtKB"/>
</dbReference>
<dbReference type="GO" id="GO:0005732">
    <property type="term" value="C:sno(s)RNA-containing ribonucleoprotein complex"/>
    <property type="evidence" value="ECO:0000250"/>
    <property type="project" value="UniProtKB"/>
</dbReference>
<dbReference type="GO" id="GO:0042802">
    <property type="term" value="F:identical protein binding"/>
    <property type="evidence" value="ECO:0000266"/>
    <property type="project" value="RGD"/>
</dbReference>
<dbReference type="GO" id="GO:0003723">
    <property type="term" value="F:RNA binding"/>
    <property type="evidence" value="ECO:0000250"/>
    <property type="project" value="UniProtKB"/>
</dbReference>
<dbReference type="GO" id="GO:0070034">
    <property type="term" value="F:telomerase RNA binding"/>
    <property type="evidence" value="ECO:0000266"/>
    <property type="project" value="RGD"/>
</dbReference>
<dbReference type="GO" id="GO:0000493">
    <property type="term" value="P:box H/ACA snoRNP assembly"/>
    <property type="evidence" value="ECO:0000318"/>
    <property type="project" value="GO_Central"/>
</dbReference>
<dbReference type="GO" id="GO:0032212">
    <property type="term" value="P:positive regulation of telomere maintenance via telomerase"/>
    <property type="evidence" value="ECO:0000266"/>
    <property type="project" value="RGD"/>
</dbReference>
<dbReference type="GO" id="GO:1904358">
    <property type="term" value="P:positive regulation of telomere maintenance via telomere lengthening"/>
    <property type="evidence" value="ECO:0000266"/>
    <property type="project" value="RGD"/>
</dbReference>
<dbReference type="GO" id="GO:0001522">
    <property type="term" value="P:pseudouridine synthesis"/>
    <property type="evidence" value="ECO:0007669"/>
    <property type="project" value="InterPro"/>
</dbReference>
<dbReference type="GO" id="GO:0042254">
    <property type="term" value="P:ribosome biogenesis"/>
    <property type="evidence" value="ECO:0000250"/>
    <property type="project" value="UniProtKB"/>
</dbReference>
<dbReference type="GO" id="GO:0043489">
    <property type="term" value="P:RNA stabilization"/>
    <property type="evidence" value="ECO:0000250"/>
    <property type="project" value="UniProtKB"/>
</dbReference>
<dbReference type="GO" id="GO:0006364">
    <property type="term" value="P:rRNA processing"/>
    <property type="evidence" value="ECO:0007669"/>
    <property type="project" value="UniProtKB-KW"/>
</dbReference>
<dbReference type="GO" id="GO:1905323">
    <property type="term" value="P:telomerase holoenzyme complex assembly"/>
    <property type="evidence" value="ECO:0000266"/>
    <property type="project" value="RGD"/>
</dbReference>
<dbReference type="GO" id="GO:0090669">
    <property type="term" value="P:telomerase RNA stabilization"/>
    <property type="evidence" value="ECO:0000266"/>
    <property type="project" value="RGD"/>
</dbReference>
<dbReference type="FunFam" id="2.40.10.230:FF:000002">
    <property type="entry name" value="H/ACA ribonucleoprotein complex non-core subunit NAF1"/>
    <property type="match status" value="1"/>
</dbReference>
<dbReference type="Gene3D" id="2.40.10.230">
    <property type="entry name" value="Probable tRNA pseudouridine synthase domain"/>
    <property type="match status" value="1"/>
</dbReference>
<dbReference type="InterPro" id="IPR038664">
    <property type="entry name" value="Gar1/Naf1_Cbf5-bd_sf"/>
</dbReference>
<dbReference type="InterPro" id="IPR007504">
    <property type="entry name" value="H/ACA_rnp_Gar1/Naf1"/>
</dbReference>
<dbReference type="InterPro" id="IPR040309">
    <property type="entry name" value="Naf1"/>
</dbReference>
<dbReference type="InterPro" id="IPR009000">
    <property type="entry name" value="Transl_B-barrel_sf"/>
</dbReference>
<dbReference type="PANTHER" id="PTHR31633">
    <property type="entry name" value="H/ACA RIBONUCLEOPROTEIN COMPLEX NON-CORE SUBUNIT NAF1"/>
    <property type="match status" value="1"/>
</dbReference>
<dbReference type="PANTHER" id="PTHR31633:SF1">
    <property type="entry name" value="H_ACA RIBONUCLEOPROTEIN COMPLEX NON-CORE SUBUNIT NAF1"/>
    <property type="match status" value="1"/>
</dbReference>
<dbReference type="Pfam" id="PF04410">
    <property type="entry name" value="Gar1"/>
    <property type="match status" value="1"/>
</dbReference>
<dbReference type="SUPFAM" id="SSF50447">
    <property type="entry name" value="Translation proteins"/>
    <property type="match status" value="1"/>
</dbReference>
<accession>Q52KK4</accession>
<name>NAF1_RAT</name>
<proteinExistence type="evidence at protein level"/>
<comment type="function">
    <text evidence="1">RNA-binding protein required for the maturation of box H/ACA snoRNPs complex and ribosome biogenesis. During assembly of the H/ACA snoRNPs complex, it associates with the complex and disappears during maturation of the complex and is replaced by NOLA1/GAR1 to yield mature H/ACA snoRNPs complex. Probably competes with NOLA1/GAR1 for binding with DKC1/NOLA4 (By similarity).</text>
</comment>
<comment type="subunit">
    <text evidence="1">During assembly of the complex, component of the small nucleolar ribonucleoprotein particles containing H/ACA-type snoRNAs (H/ACA snoRNPs) which contains NOLA2/NHP2, NOLA3/NOP10, NAF1 and DKC1/NOLA4. Interacts directly with DKC1/NOLA4 (By similarity).</text>
</comment>
<comment type="subcellular location">
    <subcellularLocation>
        <location evidence="2">Cytoplasm</location>
    </subcellularLocation>
    <subcellularLocation>
        <location evidence="2">Nucleus</location>
    </subcellularLocation>
    <text evidence="2">Shuttles between the cytoplasm and the nucleus. Absent from the nucleolus (By similarity).</text>
</comment>
<comment type="similarity">
    <text evidence="5">Belongs to the NAF1 family.</text>
</comment>